<reference key="1">
    <citation type="submission" date="2000-09" db="EMBL/GenBank/DDBJ databases">
        <title>Novel genes expressed in rat dorsal root ganglion.</title>
        <authorList>
            <person name="Xiao H."/>
            <person name="Huang Q."/>
            <person name="Zhang F."/>
            <person name="Yang Z."/>
            <person name="Chen Z."/>
            <person name="Han Z."/>
            <person name="Zhang X."/>
        </authorList>
    </citation>
    <scope>NUCLEOTIDE SEQUENCE [MRNA]</scope>
    <source>
        <strain>Sprague-Dawley</strain>
        <tissue>Spinal ganglion</tissue>
    </source>
</reference>
<reference key="2">
    <citation type="journal article" date="2004" name="Genome Res.">
        <title>The status, quality, and expansion of the NIH full-length cDNA project: the Mammalian Gene Collection (MGC).</title>
        <authorList>
            <consortium name="The MGC Project Team"/>
        </authorList>
    </citation>
    <scope>NUCLEOTIDE SEQUENCE [LARGE SCALE MRNA]</scope>
    <source>
        <tissue>Pituitary</tissue>
    </source>
</reference>
<reference key="3">
    <citation type="submission" date="2007-04" db="UniProtKB">
        <authorList>
            <person name="Lubec G."/>
            <person name="Chen W.-Q."/>
        </authorList>
    </citation>
    <scope>PROTEIN SEQUENCE OF 39-56 AND 153-166</scope>
    <scope>IDENTIFICATION BY MASS SPECTROMETRY</scope>
    <source>
        <strain>Sprague-Dawley</strain>
        <tissue>Hippocampus</tissue>
    </source>
</reference>
<name>RAN_RAT</name>
<keyword id="KW-0007">Acetylation</keyword>
<keyword id="KW-0131">Cell cycle</keyword>
<keyword id="KW-0132">Cell division</keyword>
<keyword id="KW-0963">Cytoplasm</keyword>
<keyword id="KW-0903">Direct protein sequencing</keyword>
<keyword id="KW-0342">GTP-binding</keyword>
<keyword id="KW-0378">Hydrolase</keyword>
<keyword id="KW-1017">Isopeptide bond</keyword>
<keyword id="KW-0460">Magnesium</keyword>
<keyword id="KW-0479">Metal-binding</keyword>
<keyword id="KW-0498">Mitosis</keyword>
<keyword id="KW-0547">Nucleotide-binding</keyword>
<keyword id="KW-0539">Nucleus</keyword>
<keyword id="KW-0597">Phosphoprotein</keyword>
<keyword id="KW-0653">Protein transport</keyword>
<keyword id="KW-1185">Reference proteome</keyword>
<keyword id="KW-0813">Transport</keyword>
<keyword id="KW-0832">Ubl conjugation</keyword>
<comment type="function">
    <text evidence="2">GTPase involved in nucleocytoplasmic transport, participating both to the import and the export from the nucleus of proteins and RNAs. Switches between a cytoplasmic GDP- and a nuclear GTP-bound state by nucleotide exchange and GTP hydrolysis. Nuclear import receptors such as importin beta bind their substrates only in the absence of GTP-bound RAN and release them upon direct interaction with GTP-bound RAN, while export receptors behave in the opposite way. Thereby, RAN controls cargo loading and release by transport receptors in the proper compartment and ensures the directionality of the transport. Interaction with RANBP1 induces a conformation change in the complex formed by XPO1 and RAN that triggers the release of the nuclear export signal of cargo proteins. RAN (GTP-bound form) triggers microtubule assembly at mitotic chromosomes and is required for normal mitotic spindle assembly and chromosome segregation. Required for normal progress through mitosis. The complex with BIRC5/survivin plays a role in mitotic spindle formation by serving as a physical scaffold to help deliver the RAN effector molecule TPX2 to microtubules. Acts as a negative regulator of the kinase activity of VRK1 and VRK2. Enhances AR-mediated transactivation.</text>
</comment>
<comment type="catalytic activity">
    <reaction evidence="2">
        <text>GTP + H2O = GDP + phosphate + H(+)</text>
        <dbReference type="Rhea" id="RHEA:19669"/>
        <dbReference type="ChEBI" id="CHEBI:15377"/>
        <dbReference type="ChEBI" id="CHEBI:15378"/>
        <dbReference type="ChEBI" id="CHEBI:37565"/>
        <dbReference type="ChEBI" id="CHEBI:43474"/>
        <dbReference type="ChEBI" id="CHEBI:58189"/>
    </reaction>
    <physiologicalReaction direction="left-to-right" evidence="2">
        <dbReference type="Rhea" id="RHEA:19670"/>
    </physiologicalReaction>
</comment>
<comment type="cofactor">
    <cofactor evidence="2">
        <name>Mg(2+)</name>
        <dbReference type="ChEBI" id="CHEBI:18420"/>
    </cofactor>
    <text evidence="2">Mg(2+) interacts primarily with the phosphate groups of the bound guanine nucleotide.</text>
</comment>
<comment type="subunit">
    <text evidence="1 2 3">Monomer. Interacts with RANGAP1, which promotes RAN-mediated GTP hydrolysis. Interacts with KPNB1. Interaction with KPNB1 inhibits RANGAP1-mediated stimulation of GTPase activity. Interacts with RCC1 which promotes the exchange of RAN-bound GDP by GTP. Interaction with KPNB1 inhibits RCC1-mediated exchange of RAN-bound GDP by GTP. Interacts (GTP-bound form) with TNPO1; the interaction is direct. Interacts (GTP-bound form) with TNPO3; the interaction is direct. Interacts with KPNB1 and with TNPO1; both inhibit RAN GTPase activity. Interacts (via C-terminus) with RANBP1, which alleviates the inhibition of RAN GTPase activity. Interacts with RANGRF, which promotes the release of bound guanine nucleotide. RANGRF and RCC1 compete for an overlapping binding site on RAN. Identified in a complex with KPNA2 and CSE1L; interaction with RANBP1 mediates dissociation of RAN from this complex. Interaction with both RANBP1 and KPNA2 promotes dissociation of the complex between RAN and KPNB1. Identified in a complex composed of RAN, RANGAP1 and RANBP1. Identified in a complex that contains TNPO1, RAN and RANBP1. Identified in a nuclear export complex with XPO1. Found in a nuclear export complex with RANBP3 and XPO1. Interacts with RANBP2/NUP358. Interaction with RANBP1 or RANBP2 induces a conformation change in the complex formed by XPO1 and RAN that triggers the release of the nuclear export signal of cargo proteins. Component of a nuclear export receptor complex composed of KPNB1, RAN, SNUPN and XPO1 (By similarity). Found in a nuclear export complex with RAN, XPO5 and pre-miRNA (By similarity). Interacts (GTP-bound form) with XPO5 (By similarity). Part of a complex consisting of RANBP9, RAN, DYRK1B and COPS5. Interacts with RANBP9 and RANBP10. Interacts in its GTP-bound form with BIRC5/survivin at S and M phases of the cell cycle. Interacts with TERT; the interaction requires hydrogen peroxide-mediated phosphorylation of TERT and transports TERT to the nucleus. Interacts with MAD2L2. Interacts with VRK1 and VRK3. Interacts with VRK2 (By similarity). Interacts with NEMP1 and KPNB1 (By similarity). Interacts (GDP-bound form) with NUTF2; regulates RAN nuclear import. Interacts with CAPG; mediates CAPG nuclear import. Interacts with NUP153. Interacts with the AR N-terminal poly-Gln region; the interaction with AR is inversely correlated with the poly-Gln length (By similarity). Interacts with MYCBP2, which promotes RAN-mediated GTP hydrolysis (By similarity). Interacts with EPG5 (By similarity).</text>
</comment>
<comment type="subcellular location">
    <subcellularLocation>
        <location evidence="2">Nucleus</location>
    </subcellularLocation>
    <subcellularLocation>
        <location evidence="2">Nucleus envelope</location>
    </subcellularLocation>
    <subcellularLocation>
        <location evidence="2">Cytoplasm</location>
        <location evidence="2">Cytosol</location>
    </subcellularLocation>
    <subcellularLocation>
        <location evidence="2">Cytoplasm</location>
    </subcellularLocation>
    <subcellularLocation>
        <location evidence="2">Melanosome</location>
    </subcellularLocation>
    <text evidence="2">Predominantly nuclear during interphase. Becomes dispersed throughout the cytoplasm during mitosis (By similarity). Identified by mass spectrometry in melanosome fractions from stage I to stage IV (By similarity).</text>
</comment>
<comment type="PTM">
    <text evidence="2">Acetylation by KAT5 at Lys-134 is increased during mitosis, impairs RANGRF binding and enhances RCC1 binding. Acetylation at Lys-37 enhances the association with nuclear export components. Deacetylation of Lys-37 by SIRT7 regulates the nuclear export of NF-kappa-B subunit RELA/p65.</text>
</comment>
<comment type="similarity">
    <text evidence="4 5">Belongs to the small GTPase superfamily. Ran family.</text>
</comment>
<evidence type="ECO:0000250" key="1">
    <source>
        <dbReference type="UniProtKB" id="P62825"/>
    </source>
</evidence>
<evidence type="ECO:0000250" key="2">
    <source>
        <dbReference type="UniProtKB" id="P62826"/>
    </source>
</evidence>
<evidence type="ECO:0000250" key="3">
    <source>
        <dbReference type="UniProtKB" id="P62827"/>
    </source>
</evidence>
<evidence type="ECO:0000255" key="4">
    <source>
        <dbReference type="PROSITE-ProRule" id="PRU00752"/>
    </source>
</evidence>
<evidence type="ECO:0000305" key="5"/>
<sequence>MAAQGEPQVQFKLVLVGDGGTGKTTFVKRHLTGEFEKKYVATLGVEVHPLVFHTNRGPIKFNVWDTAGQEKFGGLRDGYYIQAQCAIIMFDVTSRVTYKNVPNWHRDLVRVCENIPIVLCGNKVDIKDRKVKAKSIVFHRKKNLQYYDISAKSNYNFEKPFLWLARKLIGDPNLEFVAMPALAPPEVVMDPALAAQYEHDLEVAQTTALPDEDDDL</sequence>
<gene>
    <name type="primary">Ran</name>
</gene>
<accession>P62828</accession>
<accession>P17080</accession>
<accession>P28746</accession>
<accession>P28747</accession>
<accession>Q9CSP3</accession>
<accession>Q9CWI7</accession>
<accession>Q9CZA2</accession>
<accession>Q9UDJ5</accession>
<accession>Q9UEU9</accession>
<feature type="initiator methionine" description="Removed" evidence="2">
    <location>
        <position position="1"/>
    </location>
</feature>
<feature type="chain" id="PRO_0000208698" description="GTP-binding nuclear protein Ran">
    <location>
        <begin position="2"/>
        <end position="216"/>
    </location>
</feature>
<feature type="domain" description="Small GTPase Ran-type" evidence="4">
    <location>
        <begin position="7"/>
        <end position="171"/>
    </location>
</feature>
<feature type="region of interest" description="Switch-I" evidence="4">
    <location>
        <begin position="37"/>
        <end position="45"/>
    </location>
</feature>
<feature type="region of interest" description="Switch-II" evidence="4">
    <location>
        <begin position="68"/>
        <end position="84"/>
    </location>
</feature>
<feature type="region of interest" description="Interaction with RANBP1" evidence="2">
    <location>
        <begin position="211"/>
        <end position="216"/>
    </location>
</feature>
<feature type="binding site" evidence="1">
    <location>
        <begin position="18"/>
        <end position="25"/>
    </location>
    <ligand>
        <name>GTP</name>
        <dbReference type="ChEBI" id="CHEBI:37565"/>
    </ligand>
</feature>
<feature type="binding site" evidence="1">
    <location>
        <begin position="36"/>
        <end position="42"/>
    </location>
    <ligand>
        <name>GTP</name>
        <dbReference type="ChEBI" id="CHEBI:37565"/>
    </ligand>
</feature>
<feature type="binding site" evidence="1">
    <location>
        <position position="68"/>
    </location>
    <ligand>
        <name>GTP</name>
        <dbReference type="ChEBI" id="CHEBI:37565"/>
    </ligand>
</feature>
<feature type="binding site" evidence="1">
    <location>
        <begin position="122"/>
        <end position="125"/>
    </location>
    <ligand>
        <name>GTP</name>
        <dbReference type="ChEBI" id="CHEBI:37565"/>
    </ligand>
</feature>
<feature type="binding site" evidence="1">
    <location>
        <begin position="150"/>
        <end position="152"/>
    </location>
    <ligand>
        <name>GTP</name>
        <dbReference type="ChEBI" id="CHEBI:37565"/>
    </ligand>
</feature>
<feature type="site" description="Essential for GTP hydrolysis" evidence="2">
    <location>
        <position position="69"/>
    </location>
</feature>
<feature type="modified residue" description="N-acetylalanine" evidence="2">
    <location>
        <position position="2"/>
    </location>
</feature>
<feature type="modified residue" description="Phosphothreonine" evidence="2">
    <location>
        <position position="24"/>
    </location>
</feature>
<feature type="modified residue" description="N6-acetyllysine" evidence="2">
    <location>
        <position position="37"/>
    </location>
</feature>
<feature type="modified residue" description="N6-acetyllysine" evidence="2">
    <location>
        <position position="60"/>
    </location>
</feature>
<feature type="modified residue" description="N6-acetyllysine; alternate" evidence="2">
    <location>
        <position position="71"/>
    </location>
</feature>
<feature type="modified residue" description="N6-acetyllysine" evidence="2">
    <location>
        <position position="99"/>
    </location>
</feature>
<feature type="modified residue" description="N6-acetyllysine" evidence="2">
    <location>
        <position position="134"/>
    </location>
</feature>
<feature type="modified residue" description="N6-acetyllysine; alternate" evidence="2">
    <location>
        <position position="159"/>
    </location>
</feature>
<feature type="modified residue" description="N6-succinyllysine; alternate" evidence="3">
    <location>
        <position position="159"/>
    </location>
</feature>
<feature type="cross-link" description="Glycyl lysine isopeptide (Lys-Gly) (interchain with G-Cter in SUMO2); alternate" evidence="2">
    <location>
        <position position="71"/>
    </location>
</feature>
<feature type="cross-link" description="Glycyl lysine isopeptide (Lys-Gly) (interchain with G-Cter in ubiquitin); alternate" evidence="2">
    <location>
        <position position="71"/>
    </location>
</feature>
<feature type="cross-link" description="Glycyl lysine isopeptide (Lys-Gly) (interchain with G-Cter in SUMO2)" evidence="2">
    <location>
        <position position="152"/>
    </location>
</feature>
<organism>
    <name type="scientific">Rattus norvegicus</name>
    <name type="common">Rat</name>
    <dbReference type="NCBI Taxonomy" id="10116"/>
    <lineage>
        <taxon>Eukaryota</taxon>
        <taxon>Metazoa</taxon>
        <taxon>Chordata</taxon>
        <taxon>Craniata</taxon>
        <taxon>Vertebrata</taxon>
        <taxon>Euteleostomi</taxon>
        <taxon>Mammalia</taxon>
        <taxon>Eutheria</taxon>
        <taxon>Euarchontoglires</taxon>
        <taxon>Glires</taxon>
        <taxon>Rodentia</taxon>
        <taxon>Myomorpha</taxon>
        <taxon>Muroidea</taxon>
        <taxon>Muridae</taxon>
        <taxon>Murinae</taxon>
        <taxon>Rattus</taxon>
    </lineage>
</organism>
<protein>
    <recommendedName>
        <fullName>GTP-binding nuclear protein Ran</fullName>
        <ecNumber evidence="2">3.6.5.-</ecNumber>
    </recommendedName>
    <alternativeName>
        <fullName>GTPase Ran</fullName>
    </alternativeName>
    <alternativeName>
        <fullName>Ras-like protein TC4</fullName>
    </alternativeName>
    <alternativeName>
        <fullName>Ras-related nuclear protein</fullName>
    </alternativeName>
</protein>
<proteinExistence type="evidence at protein level"/>
<dbReference type="EC" id="3.6.5.-" evidence="2"/>
<dbReference type="EMBL" id="AF306457">
    <property type="protein sequence ID" value="AAG33229.1"/>
    <property type="molecule type" value="mRNA"/>
</dbReference>
<dbReference type="EMBL" id="BC059123">
    <property type="protein sequence ID" value="AAH59123.1"/>
    <property type="molecule type" value="mRNA"/>
</dbReference>
<dbReference type="RefSeq" id="NP_445891.1">
    <property type="nucleotide sequence ID" value="NM_053439.3"/>
</dbReference>
<dbReference type="RefSeq" id="XP_006249347.1">
    <property type="nucleotide sequence ID" value="XM_006249285.4"/>
</dbReference>
<dbReference type="BMRB" id="P62828"/>
<dbReference type="SMR" id="P62828"/>
<dbReference type="BioGRID" id="249998">
    <property type="interactions" value="7"/>
</dbReference>
<dbReference type="FunCoup" id="P62828">
    <property type="interactions" value="3884"/>
</dbReference>
<dbReference type="IntAct" id="P62828">
    <property type="interactions" value="2"/>
</dbReference>
<dbReference type="MINT" id="P62828"/>
<dbReference type="STRING" id="10116.ENSRNOP00000001247"/>
<dbReference type="CarbonylDB" id="P62828"/>
<dbReference type="GlyGen" id="P62828">
    <property type="glycosylation" value="1 site, 1 O-linked glycan (1 site)"/>
</dbReference>
<dbReference type="iPTMnet" id="P62828"/>
<dbReference type="PhosphoSitePlus" id="P62828"/>
<dbReference type="SwissPalm" id="P62828"/>
<dbReference type="jPOST" id="P62828"/>
<dbReference type="PaxDb" id="10116-ENSRNOP00000001247"/>
<dbReference type="Ensembl" id="ENSRNOT00000001247.8">
    <property type="protein sequence ID" value="ENSRNOP00000001247.4"/>
    <property type="gene ID" value="ENSRNOG00000000938.8"/>
</dbReference>
<dbReference type="GeneID" id="84509"/>
<dbReference type="KEGG" id="rno:84509"/>
<dbReference type="AGR" id="RGD:620367"/>
<dbReference type="CTD" id="5901"/>
<dbReference type="RGD" id="620367">
    <property type="gene designation" value="Ran"/>
</dbReference>
<dbReference type="eggNOG" id="KOG0096">
    <property type="taxonomic scope" value="Eukaryota"/>
</dbReference>
<dbReference type="GeneTree" id="ENSGT00940000153786"/>
<dbReference type="HOGENOM" id="CLU_041217_13_0_1"/>
<dbReference type="InParanoid" id="P62828"/>
<dbReference type="OMA" id="FNAWDTA"/>
<dbReference type="OrthoDB" id="48625at2759"/>
<dbReference type="PhylomeDB" id="P62828"/>
<dbReference type="TreeFam" id="TF106302"/>
<dbReference type="Reactome" id="R-RNO-1655829">
    <property type="pathway name" value="Regulation of cholesterol biosynthesis by SREBP (SREBF)"/>
</dbReference>
<dbReference type="Reactome" id="R-RNO-5578749">
    <property type="pathway name" value="Transcriptional regulation by small RNAs"/>
</dbReference>
<dbReference type="Reactome" id="R-RNO-9615933">
    <property type="pathway name" value="Postmitotic nuclear pore complex (NPC) reformation"/>
</dbReference>
<dbReference type="PRO" id="PR:P62828"/>
<dbReference type="Proteomes" id="UP000002494">
    <property type="component" value="Chromosome 12"/>
</dbReference>
<dbReference type="Bgee" id="ENSRNOG00000000938">
    <property type="expression patterns" value="Expressed in thymus and 20 other cell types or tissues"/>
</dbReference>
<dbReference type="GO" id="GO:0005814">
    <property type="term" value="C:centriole"/>
    <property type="evidence" value="ECO:0000266"/>
    <property type="project" value="RGD"/>
</dbReference>
<dbReference type="GO" id="GO:0000785">
    <property type="term" value="C:chromatin"/>
    <property type="evidence" value="ECO:0000266"/>
    <property type="project" value="RGD"/>
</dbReference>
<dbReference type="GO" id="GO:0005737">
    <property type="term" value="C:cytoplasm"/>
    <property type="evidence" value="ECO:0000266"/>
    <property type="project" value="RGD"/>
</dbReference>
<dbReference type="GO" id="GO:0005829">
    <property type="term" value="C:cytosol"/>
    <property type="evidence" value="ECO:0007669"/>
    <property type="project" value="UniProtKB-SubCell"/>
</dbReference>
<dbReference type="GO" id="GO:0001673">
    <property type="term" value="C:male germ cell nucleus"/>
    <property type="evidence" value="ECO:0000314"/>
    <property type="project" value="RGD"/>
</dbReference>
<dbReference type="GO" id="GO:0002177">
    <property type="term" value="C:manchette"/>
    <property type="evidence" value="ECO:0000314"/>
    <property type="project" value="RGD"/>
</dbReference>
<dbReference type="GO" id="GO:0042470">
    <property type="term" value="C:melanosome"/>
    <property type="evidence" value="ECO:0007669"/>
    <property type="project" value="UniProtKB-SubCell"/>
</dbReference>
<dbReference type="GO" id="GO:0030496">
    <property type="term" value="C:midbody"/>
    <property type="evidence" value="ECO:0000266"/>
    <property type="project" value="RGD"/>
</dbReference>
<dbReference type="GO" id="GO:0005635">
    <property type="term" value="C:nuclear envelope"/>
    <property type="evidence" value="ECO:0000266"/>
    <property type="project" value="RGD"/>
</dbReference>
<dbReference type="GO" id="GO:0005643">
    <property type="term" value="C:nuclear pore"/>
    <property type="evidence" value="ECO:0000314"/>
    <property type="project" value="RGD"/>
</dbReference>
<dbReference type="GO" id="GO:0005730">
    <property type="term" value="C:nucleolus"/>
    <property type="evidence" value="ECO:0000266"/>
    <property type="project" value="RGD"/>
</dbReference>
<dbReference type="GO" id="GO:0005654">
    <property type="term" value="C:nucleoplasm"/>
    <property type="evidence" value="ECO:0007669"/>
    <property type="project" value="Ensembl"/>
</dbReference>
<dbReference type="GO" id="GO:0005634">
    <property type="term" value="C:nucleus"/>
    <property type="evidence" value="ECO:0000266"/>
    <property type="project" value="RGD"/>
</dbReference>
<dbReference type="GO" id="GO:0032991">
    <property type="term" value="C:protein-containing complex"/>
    <property type="evidence" value="ECO:0000314"/>
    <property type="project" value="RGD"/>
</dbReference>
<dbReference type="GO" id="GO:0055037">
    <property type="term" value="C:recycling endosome"/>
    <property type="evidence" value="ECO:0000266"/>
    <property type="project" value="RGD"/>
</dbReference>
<dbReference type="GO" id="GO:0016442">
    <property type="term" value="C:RISC complex"/>
    <property type="evidence" value="ECO:0000266"/>
    <property type="project" value="RGD"/>
</dbReference>
<dbReference type="GO" id="GO:0042565">
    <property type="term" value="C:RNA nuclear export complex"/>
    <property type="evidence" value="ECO:0000266"/>
    <property type="project" value="RGD"/>
</dbReference>
<dbReference type="GO" id="GO:0036126">
    <property type="term" value="C:sperm flagellum"/>
    <property type="evidence" value="ECO:0000314"/>
    <property type="project" value="RGD"/>
</dbReference>
<dbReference type="GO" id="GO:0045505">
    <property type="term" value="F:dynein intermediate chain binding"/>
    <property type="evidence" value="ECO:0000314"/>
    <property type="project" value="RGD"/>
</dbReference>
<dbReference type="GO" id="GO:0003925">
    <property type="term" value="F:G protein activity"/>
    <property type="evidence" value="ECO:0000266"/>
    <property type="project" value="RGD"/>
</dbReference>
<dbReference type="GO" id="GO:0019003">
    <property type="term" value="F:GDP binding"/>
    <property type="evidence" value="ECO:0000314"/>
    <property type="project" value="RGD"/>
</dbReference>
<dbReference type="GO" id="GO:0005525">
    <property type="term" value="F:GTP binding"/>
    <property type="evidence" value="ECO:0000314"/>
    <property type="project" value="RGD"/>
</dbReference>
<dbReference type="GO" id="GO:0003924">
    <property type="term" value="F:GTPase activity"/>
    <property type="evidence" value="ECO:0000250"/>
    <property type="project" value="UniProtKB"/>
</dbReference>
<dbReference type="GO" id="GO:0061676">
    <property type="term" value="F:importin-alpha family protein binding"/>
    <property type="evidence" value="ECO:0000314"/>
    <property type="project" value="RGD"/>
</dbReference>
<dbReference type="GO" id="GO:0000287">
    <property type="term" value="F:magnesium ion binding"/>
    <property type="evidence" value="ECO:0000250"/>
    <property type="project" value="UniProtKB"/>
</dbReference>
<dbReference type="GO" id="GO:0005049">
    <property type="term" value="F:nuclear export signal receptor activity"/>
    <property type="evidence" value="ECO:0000266"/>
    <property type="project" value="RGD"/>
</dbReference>
<dbReference type="GO" id="GO:0070883">
    <property type="term" value="F:pre-miRNA binding"/>
    <property type="evidence" value="ECO:0007669"/>
    <property type="project" value="Ensembl"/>
</dbReference>
<dbReference type="GO" id="GO:0019904">
    <property type="term" value="F:protein domain specific binding"/>
    <property type="evidence" value="ECO:0000353"/>
    <property type="project" value="RGD"/>
</dbReference>
<dbReference type="GO" id="GO:0046982">
    <property type="term" value="F:protein heterodimerization activity"/>
    <property type="evidence" value="ECO:0000266"/>
    <property type="project" value="RGD"/>
</dbReference>
<dbReference type="GO" id="GO:0044877">
    <property type="term" value="F:protein-containing complex binding"/>
    <property type="evidence" value="ECO:0000353"/>
    <property type="project" value="RGD"/>
</dbReference>
<dbReference type="GO" id="GO:1905172">
    <property type="term" value="F:RISC complex binding"/>
    <property type="evidence" value="ECO:0000266"/>
    <property type="project" value="RGD"/>
</dbReference>
<dbReference type="GO" id="GO:0030036">
    <property type="term" value="P:actin cytoskeleton organization"/>
    <property type="evidence" value="ECO:0000266"/>
    <property type="project" value="RGD"/>
</dbReference>
<dbReference type="GO" id="GO:0051301">
    <property type="term" value="P:cell division"/>
    <property type="evidence" value="ECO:0007669"/>
    <property type="project" value="UniProtKB-KW"/>
</dbReference>
<dbReference type="GO" id="GO:0071389">
    <property type="term" value="P:cellular response to mineralocorticoid stimulus"/>
    <property type="evidence" value="ECO:0000270"/>
    <property type="project" value="RGD"/>
</dbReference>
<dbReference type="GO" id="GO:0046039">
    <property type="term" value="P:GTP metabolic process"/>
    <property type="evidence" value="ECO:0000250"/>
    <property type="project" value="UniProtKB"/>
</dbReference>
<dbReference type="GO" id="GO:0021766">
    <property type="term" value="P:hippocampus development"/>
    <property type="evidence" value="ECO:0000270"/>
    <property type="project" value="RGD"/>
</dbReference>
<dbReference type="GO" id="GO:0000070">
    <property type="term" value="P:mitotic sister chromatid segregation"/>
    <property type="evidence" value="ECO:0000250"/>
    <property type="project" value="UniProtKB"/>
</dbReference>
<dbReference type="GO" id="GO:0006913">
    <property type="term" value="P:nucleocytoplasmic transport"/>
    <property type="evidence" value="ECO:0000304"/>
    <property type="project" value="RGD"/>
</dbReference>
<dbReference type="GO" id="GO:0046827">
    <property type="term" value="P:positive regulation of protein export from nucleus"/>
    <property type="evidence" value="ECO:0000266"/>
    <property type="project" value="RGD"/>
</dbReference>
<dbReference type="GO" id="GO:0042307">
    <property type="term" value="P:positive regulation of protein import into nucleus"/>
    <property type="evidence" value="ECO:0000266"/>
    <property type="project" value="RGD"/>
</dbReference>
<dbReference type="GO" id="GO:0006611">
    <property type="term" value="P:protein export from nucleus"/>
    <property type="evidence" value="ECO:0000250"/>
    <property type="project" value="UniProtKB"/>
</dbReference>
<dbReference type="GO" id="GO:0006606">
    <property type="term" value="P:protein import into nucleus"/>
    <property type="evidence" value="ECO:0000250"/>
    <property type="project" value="UniProtKB"/>
</dbReference>
<dbReference type="GO" id="GO:0008104">
    <property type="term" value="P:protein localization"/>
    <property type="evidence" value="ECO:0000266"/>
    <property type="project" value="RGD"/>
</dbReference>
<dbReference type="GO" id="GO:1902570">
    <property type="term" value="P:protein localization to nucleolus"/>
    <property type="evidence" value="ECO:0000266"/>
    <property type="project" value="RGD"/>
</dbReference>
<dbReference type="GO" id="GO:0031503">
    <property type="term" value="P:protein-containing complex localization"/>
    <property type="evidence" value="ECO:0000266"/>
    <property type="project" value="RGD"/>
</dbReference>
<dbReference type="GO" id="GO:0000055">
    <property type="term" value="P:ribosomal large subunit export from nucleus"/>
    <property type="evidence" value="ECO:0000266"/>
    <property type="project" value="RGD"/>
</dbReference>
<dbReference type="GO" id="GO:0000056">
    <property type="term" value="P:ribosomal small subunit export from nucleus"/>
    <property type="evidence" value="ECO:0000266"/>
    <property type="project" value="RGD"/>
</dbReference>
<dbReference type="GO" id="GO:0000054">
    <property type="term" value="P:ribosomal subunit export from nucleus"/>
    <property type="evidence" value="ECO:0000318"/>
    <property type="project" value="GO_Central"/>
</dbReference>
<dbReference type="GO" id="GO:0061015">
    <property type="term" value="P:snRNA import into nucleus"/>
    <property type="evidence" value="ECO:0000250"/>
    <property type="project" value="UniProtKB"/>
</dbReference>
<dbReference type="GO" id="GO:0007286">
    <property type="term" value="P:spermatid development"/>
    <property type="evidence" value="ECO:0000270"/>
    <property type="project" value="RGD"/>
</dbReference>
<dbReference type="CDD" id="cd00877">
    <property type="entry name" value="Ran"/>
    <property type="match status" value="1"/>
</dbReference>
<dbReference type="FunFam" id="3.40.50.300:FF:000131">
    <property type="entry name" value="GTP-binding nuclear protein Ran"/>
    <property type="match status" value="1"/>
</dbReference>
<dbReference type="Gene3D" id="3.40.50.300">
    <property type="entry name" value="P-loop containing nucleotide triphosphate hydrolases"/>
    <property type="match status" value="1"/>
</dbReference>
<dbReference type="InterPro" id="IPR027417">
    <property type="entry name" value="P-loop_NTPase"/>
</dbReference>
<dbReference type="InterPro" id="IPR002041">
    <property type="entry name" value="Ran_GTPase"/>
</dbReference>
<dbReference type="InterPro" id="IPR005225">
    <property type="entry name" value="Small_GTP-bd"/>
</dbReference>
<dbReference type="InterPro" id="IPR001806">
    <property type="entry name" value="Small_GTPase"/>
</dbReference>
<dbReference type="NCBIfam" id="TIGR00231">
    <property type="entry name" value="small_GTP"/>
    <property type="match status" value="1"/>
</dbReference>
<dbReference type="PANTHER" id="PTHR24071:SF0">
    <property type="entry name" value="GTP-BINDING NUCLEAR PROTEIN RAN"/>
    <property type="match status" value="1"/>
</dbReference>
<dbReference type="PANTHER" id="PTHR24071">
    <property type="entry name" value="RAN GTPASE"/>
    <property type="match status" value="1"/>
</dbReference>
<dbReference type="Pfam" id="PF00071">
    <property type="entry name" value="Ras"/>
    <property type="match status" value="1"/>
</dbReference>
<dbReference type="PRINTS" id="PR00627">
    <property type="entry name" value="GTPRANTC4"/>
</dbReference>
<dbReference type="SMART" id="SM00175">
    <property type="entry name" value="RAB"/>
    <property type="match status" value="1"/>
</dbReference>
<dbReference type="SMART" id="SM00176">
    <property type="entry name" value="RAN"/>
    <property type="match status" value="1"/>
</dbReference>
<dbReference type="SMART" id="SM00173">
    <property type="entry name" value="RAS"/>
    <property type="match status" value="1"/>
</dbReference>
<dbReference type="SMART" id="SM00174">
    <property type="entry name" value="RHO"/>
    <property type="match status" value="1"/>
</dbReference>
<dbReference type="SUPFAM" id="SSF52540">
    <property type="entry name" value="P-loop containing nucleoside triphosphate hydrolases"/>
    <property type="match status" value="1"/>
</dbReference>
<dbReference type="PROSITE" id="PS51418">
    <property type="entry name" value="RAN"/>
    <property type="match status" value="1"/>
</dbReference>